<protein>
    <recommendedName>
        <fullName evidence="1">Chromatin protein Cren7</fullName>
    </recommendedName>
</protein>
<keyword id="KW-0158">Chromosome</keyword>
<keyword id="KW-0963">Cytoplasm</keyword>
<keyword id="KW-0238">DNA-binding</keyword>
<keyword id="KW-0488">Methylation</keyword>
<keyword id="KW-1185">Reference proteome</keyword>
<name>CREN7_CALMQ</name>
<gene>
    <name evidence="1" type="primary">creN7</name>
    <name type="ordered locus">Cmaq_0752</name>
</gene>
<comment type="function">
    <text evidence="1">A chromatin protein, binds double-stranded DNA without sequence specificity. Constrains negative DNA supercoils.</text>
</comment>
<comment type="subunit">
    <text evidence="1">Monomer.</text>
</comment>
<comment type="subcellular location">
    <subcellularLocation>
        <location evidence="1">Chromosome</location>
    </subcellularLocation>
    <subcellularLocation>
        <location evidence="1">Cytoplasm</location>
    </subcellularLocation>
</comment>
<comment type="PTM">
    <text evidence="1">Methylated at multiple sites, to varying extents.</text>
</comment>
<comment type="similarity">
    <text evidence="1">Belongs to the Cren7 family.</text>
</comment>
<comment type="sequence caution" evidence="2">
    <conflict type="erroneous initiation">
        <sequence resource="EMBL-CDS" id="ABW01588"/>
    </conflict>
    <text>Extended N-terminus.</text>
</comment>
<feature type="chain" id="PRO_0000345166" description="Chromatin protein Cren7">
    <location>
        <begin position="1"/>
        <end position="61"/>
    </location>
</feature>
<proteinExistence type="inferred from homology"/>
<organism>
    <name type="scientific">Caldivirga maquilingensis (strain ATCC 700844 / DSM 13496 / JCM 10307 / IC-167)</name>
    <dbReference type="NCBI Taxonomy" id="397948"/>
    <lineage>
        <taxon>Archaea</taxon>
        <taxon>Thermoproteota</taxon>
        <taxon>Thermoprotei</taxon>
        <taxon>Thermoproteales</taxon>
        <taxon>Thermoproteaceae</taxon>
        <taxon>Caldivirga</taxon>
    </lineage>
</organism>
<dbReference type="EMBL" id="CP000852">
    <property type="protein sequence ID" value="ABW01588.1"/>
    <property type="status" value="ALT_INIT"/>
    <property type="molecule type" value="Genomic_DNA"/>
</dbReference>
<dbReference type="RefSeq" id="WP_048062914.1">
    <property type="nucleotide sequence ID" value="NC_009954.1"/>
</dbReference>
<dbReference type="SMR" id="A8MCT2"/>
<dbReference type="GeneID" id="5708860"/>
<dbReference type="KEGG" id="cma:Cmaq_0752"/>
<dbReference type="eggNOG" id="arCOG04114">
    <property type="taxonomic scope" value="Archaea"/>
</dbReference>
<dbReference type="HOGENOM" id="CLU_192664_0_0_2"/>
<dbReference type="OrthoDB" id="38142at2157"/>
<dbReference type="Proteomes" id="UP000001137">
    <property type="component" value="Chromosome"/>
</dbReference>
<dbReference type="GO" id="GO:0005694">
    <property type="term" value="C:chromosome"/>
    <property type="evidence" value="ECO:0007669"/>
    <property type="project" value="UniProtKB-SubCell"/>
</dbReference>
<dbReference type="GO" id="GO:0005737">
    <property type="term" value="C:cytoplasm"/>
    <property type="evidence" value="ECO:0007669"/>
    <property type="project" value="UniProtKB-SubCell"/>
</dbReference>
<dbReference type="GO" id="GO:0003690">
    <property type="term" value="F:double-stranded DNA binding"/>
    <property type="evidence" value="ECO:0007669"/>
    <property type="project" value="UniProtKB-UniRule"/>
</dbReference>
<dbReference type="Gene3D" id="2.30.30.610">
    <property type="entry name" value="Chromatin protein Cren7"/>
    <property type="match status" value="1"/>
</dbReference>
<dbReference type="HAMAP" id="MF_01387">
    <property type="entry name" value="Chromatin_Cren7"/>
    <property type="match status" value="1"/>
</dbReference>
<dbReference type="InterPro" id="IPR038647">
    <property type="entry name" value="Cren7_sf"/>
</dbReference>
<dbReference type="InterPro" id="IPR020906">
    <property type="entry name" value="dsDNA-bd_Cren7"/>
</dbReference>
<dbReference type="Pfam" id="PF11520">
    <property type="entry name" value="Cren7"/>
    <property type="match status" value="1"/>
</dbReference>
<sequence length="61" mass="6901">MAVNVQQYLNKEYEVECDGQMVRLKPVKAWVLQPKGRKGVVIGLFKCPNGKTLRKAIGKIE</sequence>
<accession>A8MCT2</accession>
<reference key="1">
    <citation type="submission" date="2007-10" db="EMBL/GenBank/DDBJ databases">
        <title>Complete sequence of Caldivirga maquilingensis IC-167.</title>
        <authorList>
            <consortium name="US DOE Joint Genome Institute"/>
            <person name="Copeland A."/>
            <person name="Lucas S."/>
            <person name="Lapidus A."/>
            <person name="Barry K."/>
            <person name="Glavina del Rio T."/>
            <person name="Dalin E."/>
            <person name="Tice H."/>
            <person name="Pitluck S."/>
            <person name="Saunders E."/>
            <person name="Brettin T."/>
            <person name="Bruce D."/>
            <person name="Detter J.C."/>
            <person name="Han C."/>
            <person name="Schmutz J."/>
            <person name="Larimer F."/>
            <person name="Land M."/>
            <person name="Hauser L."/>
            <person name="Kyrpides N."/>
            <person name="Ivanova N."/>
            <person name="Biddle J.F."/>
            <person name="Zhang Z."/>
            <person name="Fitz-Gibbon S.T."/>
            <person name="Lowe T.M."/>
            <person name="Saltikov C."/>
            <person name="House C.H."/>
            <person name="Richardson P."/>
        </authorList>
    </citation>
    <scope>NUCLEOTIDE SEQUENCE [LARGE SCALE GENOMIC DNA]</scope>
    <source>
        <strain>ATCC 700844 / DSM 13496 / JCM 10307 / IC-167</strain>
    </source>
</reference>
<evidence type="ECO:0000255" key="1">
    <source>
        <dbReference type="HAMAP-Rule" id="MF_01387"/>
    </source>
</evidence>
<evidence type="ECO:0000305" key="2"/>